<proteinExistence type="inferred from homology"/>
<protein>
    <recommendedName>
        <fullName evidence="1">Fluoride-specific ion channel FluC</fullName>
    </recommendedName>
</protein>
<name>FLUC_SHIBS</name>
<sequence>MLQLLLAVFIGGGTGSVARWLLSMRFNPLHQAIPLGTLTANLIGAFIIGMGFAWFSRMTNIDPVWKVLITTGFCGGLTTFSTFSAEVVFLLQEGRFGWALLNVFVNLLGSFAMTALAFWLFSASTAH</sequence>
<gene>
    <name evidence="1" type="primary">fluC</name>
    <name evidence="1" type="synonym">crcB</name>
    <name type="ordered locus">SBO_0489</name>
</gene>
<reference key="1">
    <citation type="journal article" date="2005" name="Nucleic Acids Res.">
        <title>Genome dynamics and diversity of Shigella species, the etiologic agents of bacillary dysentery.</title>
        <authorList>
            <person name="Yang F."/>
            <person name="Yang J."/>
            <person name="Zhang X."/>
            <person name="Chen L."/>
            <person name="Jiang Y."/>
            <person name="Yan Y."/>
            <person name="Tang X."/>
            <person name="Wang J."/>
            <person name="Xiong Z."/>
            <person name="Dong J."/>
            <person name="Xue Y."/>
            <person name="Zhu Y."/>
            <person name="Xu X."/>
            <person name="Sun L."/>
            <person name="Chen S."/>
            <person name="Nie H."/>
            <person name="Peng J."/>
            <person name="Xu J."/>
            <person name="Wang Y."/>
            <person name="Yuan Z."/>
            <person name="Wen Y."/>
            <person name="Yao Z."/>
            <person name="Shen Y."/>
            <person name="Qiang B."/>
            <person name="Hou Y."/>
            <person name="Yu J."/>
            <person name="Jin Q."/>
        </authorList>
    </citation>
    <scope>NUCLEOTIDE SEQUENCE [LARGE SCALE GENOMIC DNA]</scope>
    <source>
        <strain>Sb227</strain>
    </source>
</reference>
<evidence type="ECO:0000255" key="1">
    <source>
        <dbReference type="HAMAP-Rule" id="MF_00454"/>
    </source>
</evidence>
<accession>Q324R8</accession>
<organism>
    <name type="scientific">Shigella boydii serotype 4 (strain Sb227)</name>
    <dbReference type="NCBI Taxonomy" id="300268"/>
    <lineage>
        <taxon>Bacteria</taxon>
        <taxon>Pseudomonadati</taxon>
        <taxon>Pseudomonadota</taxon>
        <taxon>Gammaproteobacteria</taxon>
        <taxon>Enterobacterales</taxon>
        <taxon>Enterobacteriaceae</taxon>
        <taxon>Shigella</taxon>
    </lineage>
</organism>
<dbReference type="EMBL" id="CP000036">
    <property type="protein sequence ID" value="ABB65190.1"/>
    <property type="molecule type" value="Genomic_DNA"/>
</dbReference>
<dbReference type="RefSeq" id="WP_000939749.1">
    <property type="nucleotide sequence ID" value="NC_007613.1"/>
</dbReference>
<dbReference type="SMR" id="Q324R8"/>
<dbReference type="KEGG" id="sbo:SBO_0489"/>
<dbReference type="HOGENOM" id="CLU_114342_3_3_6"/>
<dbReference type="Proteomes" id="UP000007067">
    <property type="component" value="Chromosome"/>
</dbReference>
<dbReference type="GO" id="GO:0005886">
    <property type="term" value="C:plasma membrane"/>
    <property type="evidence" value="ECO:0007669"/>
    <property type="project" value="UniProtKB-SubCell"/>
</dbReference>
<dbReference type="GO" id="GO:0062054">
    <property type="term" value="F:fluoride channel activity"/>
    <property type="evidence" value="ECO:0007669"/>
    <property type="project" value="UniProtKB-UniRule"/>
</dbReference>
<dbReference type="GO" id="GO:0046872">
    <property type="term" value="F:metal ion binding"/>
    <property type="evidence" value="ECO:0007669"/>
    <property type="project" value="UniProtKB-KW"/>
</dbReference>
<dbReference type="GO" id="GO:0140114">
    <property type="term" value="P:cellular detoxification of fluoride"/>
    <property type="evidence" value="ECO:0007669"/>
    <property type="project" value="UniProtKB-UniRule"/>
</dbReference>
<dbReference type="HAMAP" id="MF_00454">
    <property type="entry name" value="FluC"/>
    <property type="match status" value="1"/>
</dbReference>
<dbReference type="InterPro" id="IPR003691">
    <property type="entry name" value="FluC"/>
</dbReference>
<dbReference type="NCBIfam" id="TIGR00494">
    <property type="entry name" value="crcB"/>
    <property type="match status" value="1"/>
</dbReference>
<dbReference type="NCBIfam" id="NF010792">
    <property type="entry name" value="PRK14196.1"/>
    <property type="match status" value="1"/>
</dbReference>
<dbReference type="PANTHER" id="PTHR28259">
    <property type="entry name" value="FLUORIDE EXPORT PROTEIN 1-RELATED"/>
    <property type="match status" value="1"/>
</dbReference>
<dbReference type="PANTHER" id="PTHR28259:SF1">
    <property type="entry name" value="FLUORIDE EXPORT PROTEIN 1-RELATED"/>
    <property type="match status" value="1"/>
</dbReference>
<dbReference type="Pfam" id="PF02537">
    <property type="entry name" value="CRCB"/>
    <property type="match status" value="1"/>
</dbReference>
<feature type="chain" id="PRO_0000252936" description="Fluoride-specific ion channel FluC">
    <location>
        <begin position="1"/>
        <end position="127"/>
    </location>
</feature>
<feature type="transmembrane region" description="Helical" evidence="1">
    <location>
        <begin position="4"/>
        <end position="24"/>
    </location>
</feature>
<feature type="transmembrane region" description="Helical" evidence="1">
    <location>
        <begin position="35"/>
        <end position="55"/>
    </location>
</feature>
<feature type="transmembrane region" description="Helical" evidence="1">
    <location>
        <begin position="71"/>
        <end position="91"/>
    </location>
</feature>
<feature type="transmembrane region" description="Helical" evidence="1">
    <location>
        <begin position="103"/>
        <end position="123"/>
    </location>
</feature>
<feature type="binding site" evidence="1">
    <location>
        <position position="75"/>
    </location>
    <ligand>
        <name>Na(+)</name>
        <dbReference type="ChEBI" id="CHEBI:29101"/>
        <note>structural</note>
    </ligand>
</feature>
<feature type="binding site" evidence="1">
    <location>
        <position position="78"/>
    </location>
    <ligand>
        <name>Na(+)</name>
        <dbReference type="ChEBI" id="CHEBI:29101"/>
        <note>structural</note>
    </ligand>
</feature>
<comment type="function">
    <text evidence="1">Fluoride-specific ion channel. Important for reducing fluoride concentration in the cell, thus reducing its toxicity.</text>
</comment>
<comment type="catalytic activity">
    <reaction evidence="1">
        <text>fluoride(in) = fluoride(out)</text>
        <dbReference type="Rhea" id="RHEA:76159"/>
        <dbReference type="ChEBI" id="CHEBI:17051"/>
    </reaction>
    <physiologicalReaction direction="left-to-right" evidence="1">
        <dbReference type="Rhea" id="RHEA:76160"/>
    </physiologicalReaction>
</comment>
<comment type="activity regulation">
    <text evidence="1">Na(+) is not transported, but it plays an essential structural role and its presence is essential for fluoride channel function.</text>
</comment>
<comment type="subcellular location">
    <subcellularLocation>
        <location evidence="1">Cell inner membrane</location>
        <topology evidence="1">Multi-pass membrane protein</topology>
    </subcellularLocation>
</comment>
<comment type="similarity">
    <text evidence="1">Belongs to the fluoride channel Fluc/FEX (TC 1.A.43) family.</text>
</comment>
<keyword id="KW-0997">Cell inner membrane</keyword>
<keyword id="KW-1003">Cell membrane</keyword>
<keyword id="KW-0407">Ion channel</keyword>
<keyword id="KW-0406">Ion transport</keyword>
<keyword id="KW-0472">Membrane</keyword>
<keyword id="KW-0479">Metal-binding</keyword>
<keyword id="KW-0915">Sodium</keyword>
<keyword id="KW-0812">Transmembrane</keyword>
<keyword id="KW-1133">Transmembrane helix</keyword>
<keyword id="KW-0813">Transport</keyword>